<sequence length="396" mass="44865">MINVYSNLMSAWPATMAMSPKLNRNMPTFSQIWDYERITPASAAGETLKSIQGAIGEYFERRHFFNEIVTGGQKTLYEMMPPSAAKAFTEAFFQISSLTRDEIITHKFKTVRAFNLFSLEQQEIPAVIIALDNITAADDLKFYPDRDTCGCSFHGSLNDAIEGSLCEFMETQSLLLYWLQGKANTEISSEIVTGINHIDEILLALRSEGDIRIFDITLPGAPGHAVLTLYGTKNKISRIKYSTGLSYANSLKKALCKSVVELWQSYICLHNFLIGGYTDDDIIDSYQRHFMSCNKYESFTDLCENTVLLSDDVKLTLEENITSDTNLLNYLQQISDNIFVYYARERVSNSLVWYTKIVSPDFFLHMNNSGAININNKIYHTGDGIKVRESKMVPFP</sequence>
<gene>
    <name type="primary">mcbD</name>
</gene>
<feature type="chain" id="PRO_0000068573" description="Microcin B17-processing protein McbD">
    <location>
        <begin position="1"/>
        <end position="396"/>
    </location>
</feature>
<feature type="domain" description="YcaO" evidence="1">
    <location>
        <begin position="41"/>
        <end position="396"/>
    </location>
</feature>
<feature type="strand" evidence="3">
    <location>
        <begin position="10"/>
        <end position="12"/>
    </location>
</feature>
<feature type="strand" evidence="3">
    <location>
        <begin position="14"/>
        <end position="18"/>
    </location>
</feature>
<feature type="strand" evidence="3">
    <location>
        <begin position="28"/>
        <end position="33"/>
    </location>
</feature>
<feature type="turn" evidence="3">
    <location>
        <begin position="35"/>
        <end position="37"/>
    </location>
</feature>
<feature type="strand" evidence="3">
    <location>
        <begin position="41"/>
        <end position="46"/>
    </location>
</feature>
<feature type="helix" evidence="3">
    <location>
        <begin position="47"/>
        <end position="66"/>
    </location>
</feature>
<feature type="helix" evidence="3">
    <location>
        <begin position="76"/>
        <end position="79"/>
    </location>
</feature>
<feature type="helix" evidence="3">
    <location>
        <begin position="82"/>
        <end position="95"/>
    </location>
</feature>
<feature type="strand" evidence="4">
    <location>
        <begin position="96"/>
        <end position="98"/>
    </location>
</feature>
<feature type="helix" evidence="3">
    <location>
        <begin position="100"/>
        <end position="105"/>
    </location>
</feature>
<feature type="strand" evidence="3">
    <location>
        <begin position="108"/>
        <end position="115"/>
    </location>
</feature>
<feature type="turn" evidence="3">
    <location>
        <begin position="116"/>
        <end position="118"/>
    </location>
</feature>
<feature type="strand" evidence="3">
    <location>
        <begin position="121"/>
        <end position="125"/>
    </location>
</feature>
<feature type="helix" evidence="3">
    <location>
        <begin position="126"/>
        <end position="128"/>
    </location>
</feature>
<feature type="strand" evidence="3">
    <location>
        <begin position="132"/>
        <end position="134"/>
    </location>
</feature>
<feature type="helix" evidence="3">
    <location>
        <begin position="137"/>
        <end position="142"/>
    </location>
</feature>
<feature type="strand" evidence="3">
    <location>
        <begin position="151"/>
        <end position="156"/>
    </location>
</feature>
<feature type="helix" evidence="3">
    <location>
        <begin position="157"/>
        <end position="180"/>
    </location>
</feature>
<feature type="strand" evidence="3">
    <location>
        <begin position="182"/>
        <end position="187"/>
    </location>
</feature>
<feature type="helix" evidence="3">
    <location>
        <begin position="196"/>
        <end position="208"/>
    </location>
</feature>
<feature type="strand" evidence="3">
    <location>
        <begin position="209"/>
        <end position="215"/>
    </location>
</feature>
<feature type="strand" evidence="3">
    <location>
        <begin position="222"/>
        <end position="231"/>
    </location>
</feature>
<feature type="strand" evidence="3">
    <location>
        <begin position="240"/>
        <end position="250"/>
    </location>
</feature>
<feature type="helix" evidence="3">
    <location>
        <begin position="251"/>
        <end position="275"/>
    </location>
</feature>
<feature type="helix" evidence="3">
    <location>
        <begin position="279"/>
        <end position="281"/>
    </location>
</feature>
<feature type="helix" evidence="3">
    <location>
        <begin position="285"/>
        <end position="292"/>
    </location>
</feature>
<feature type="helix" evidence="3">
    <location>
        <begin position="296"/>
        <end position="304"/>
    </location>
</feature>
<feature type="strand" evidence="3">
    <location>
        <begin position="307"/>
        <end position="309"/>
    </location>
</feature>
<feature type="strand" evidence="3">
    <location>
        <begin position="314"/>
        <end position="316"/>
    </location>
</feature>
<feature type="turn" evidence="3">
    <location>
        <begin position="321"/>
        <end position="324"/>
    </location>
</feature>
<feature type="helix" evidence="3">
    <location>
        <begin position="327"/>
        <end position="334"/>
    </location>
</feature>
<feature type="strand" evidence="3">
    <location>
        <begin position="339"/>
        <end position="347"/>
    </location>
</feature>
<feature type="strand" evidence="3">
    <location>
        <begin position="350"/>
        <end position="358"/>
    </location>
</feature>
<feature type="strand" evidence="3">
    <location>
        <begin position="364"/>
        <end position="366"/>
    </location>
</feature>
<feature type="strand" evidence="3">
    <location>
        <begin position="375"/>
        <end position="378"/>
    </location>
</feature>
<feature type="helix" evidence="3">
    <location>
        <begin position="386"/>
        <end position="390"/>
    </location>
</feature>
<comment type="function">
    <text>Necessary to process the inactive microcin B17 (McbA) precursor into the active peptide.</text>
</comment>
<comment type="subcellular location">
    <subcellularLocation>
        <location evidence="2">Cytoplasm</location>
    </subcellularLocation>
</comment>
<name>MCBD_ECOLX</name>
<keyword id="KW-0002">3D-structure</keyword>
<keyword id="KW-0045">Antibiotic biosynthesis</keyword>
<keyword id="KW-0963">Cytoplasm</keyword>
<keyword id="KW-0614">Plasmid</keyword>
<reference key="1">
    <citation type="journal article" date="1989" name="J. Bacteriol.">
        <title>DNA sequence, products, and transcriptional pattern of the genes involved in production of the DNA replication inhibitor microcin B17.</title>
        <authorList>
            <person name="Genilloud O."/>
            <person name="Moreno F."/>
            <person name="Kolter R."/>
        </authorList>
    </citation>
    <scope>NUCLEOTIDE SEQUENCE [GENOMIC DNA]</scope>
</reference>
<evidence type="ECO:0000255" key="1">
    <source>
        <dbReference type="PROSITE-ProRule" id="PRU00999"/>
    </source>
</evidence>
<evidence type="ECO:0000305" key="2"/>
<evidence type="ECO:0007829" key="3">
    <source>
        <dbReference type="PDB" id="6GRH"/>
    </source>
</evidence>
<evidence type="ECO:0007829" key="4">
    <source>
        <dbReference type="PDB" id="6GRI"/>
    </source>
</evidence>
<geneLocation type="plasmid">
    <name>IncFII pMccB17</name>
</geneLocation>
<proteinExistence type="evidence at protein level"/>
<protein>
    <recommendedName>
        <fullName>Microcin B17-processing protein McbD</fullName>
    </recommendedName>
</protein>
<organism>
    <name type="scientific">Escherichia coli</name>
    <dbReference type="NCBI Taxonomy" id="562"/>
    <lineage>
        <taxon>Bacteria</taxon>
        <taxon>Pseudomonadati</taxon>
        <taxon>Pseudomonadota</taxon>
        <taxon>Gammaproteobacteria</taxon>
        <taxon>Enterobacterales</taxon>
        <taxon>Enterobacteriaceae</taxon>
        <taxon>Escherichia</taxon>
    </lineage>
</organism>
<dbReference type="EMBL" id="M24253">
    <property type="protein sequence ID" value="AAA72744.1"/>
    <property type="molecule type" value="Genomic_DNA"/>
</dbReference>
<dbReference type="PIR" id="D32058">
    <property type="entry name" value="D32058"/>
</dbReference>
<dbReference type="PDB" id="6GOS">
    <property type="method" value="X-ray"/>
    <property type="resolution" value="2.10 A"/>
    <property type="chains" value="D=1-396"/>
</dbReference>
<dbReference type="PDB" id="6GRG">
    <property type="method" value="X-ray"/>
    <property type="resolution" value="2.35 A"/>
    <property type="chains" value="D=1-396"/>
</dbReference>
<dbReference type="PDB" id="6GRH">
    <property type="method" value="X-ray"/>
    <property type="resolution" value="1.85 A"/>
    <property type="chains" value="D=1-396"/>
</dbReference>
<dbReference type="PDB" id="6GRI">
    <property type="method" value="X-ray"/>
    <property type="resolution" value="2.70 A"/>
    <property type="chains" value="D=1-396"/>
</dbReference>
<dbReference type="PDBsum" id="6GOS"/>
<dbReference type="PDBsum" id="6GRG"/>
<dbReference type="PDBsum" id="6GRH"/>
<dbReference type="PDBsum" id="6GRI"/>
<dbReference type="SMR" id="P23186"/>
<dbReference type="BioCyc" id="MetaCyc:MONOMER-21087"/>
<dbReference type="BRENDA" id="1.3.3.16">
    <property type="organism ID" value="2026"/>
</dbReference>
<dbReference type="GO" id="GO:0005737">
    <property type="term" value="C:cytoplasm"/>
    <property type="evidence" value="ECO:0007669"/>
    <property type="project" value="UniProtKB-SubCell"/>
</dbReference>
<dbReference type="GO" id="GO:0017000">
    <property type="term" value="P:antibiotic biosynthetic process"/>
    <property type="evidence" value="ECO:0007669"/>
    <property type="project" value="UniProtKB-KW"/>
</dbReference>
<dbReference type="InterPro" id="IPR003776">
    <property type="entry name" value="YcaO-like_dom"/>
</dbReference>
<dbReference type="Pfam" id="PF02624">
    <property type="entry name" value="YcaO"/>
    <property type="match status" value="1"/>
</dbReference>
<dbReference type="PROSITE" id="PS51664">
    <property type="entry name" value="YCAO"/>
    <property type="match status" value="1"/>
</dbReference>
<accession>P23186</accession>